<comment type="function">
    <text evidence="1">Specifically methylates the pseudouridine at position 1915 (m3Psi1915) in 23S rRNA.</text>
</comment>
<comment type="catalytic activity">
    <reaction evidence="1">
        <text>pseudouridine(1915) in 23S rRNA + S-adenosyl-L-methionine = N(3)-methylpseudouridine(1915) in 23S rRNA + S-adenosyl-L-homocysteine + H(+)</text>
        <dbReference type="Rhea" id="RHEA:42752"/>
        <dbReference type="Rhea" id="RHEA-COMP:10221"/>
        <dbReference type="Rhea" id="RHEA-COMP:10222"/>
        <dbReference type="ChEBI" id="CHEBI:15378"/>
        <dbReference type="ChEBI" id="CHEBI:57856"/>
        <dbReference type="ChEBI" id="CHEBI:59789"/>
        <dbReference type="ChEBI" id="CHEBI:65314"/>
        <dbReference type="ChEBI" id="CHEBI:74486"/>
        <dbReference type="EC" id="2.1.1.177"/>
    </reaction>
</comment>
<comment type="subunit">
    <text evidence="1">Homodimer.</text>
</comment>
<comment type="subcellular location">
    <subcellularLocation>
        <location evidence="1">Cytoplasm</location>
    </subcellularLocation>
</comment>
<comment type="similarity">
    <text evidence="1">Belongs to the RNA methyltransferase RlmH family.</text>
</comment>
<sequence>MKVKLICVGKLKERYLKDGISEYQKRLSRFCQFEMIELTDERTPDKASFADNQLIMSKEAQRIHKKIGERDFVIALAIEGKQFPSETFSELISGVTVKGYSTITFIIGGSLGLDSIIKKRANMLMSFGLLTLPHQLMRLVLTEQIYRAFMITQGSPYHK</sequence>
<name>RLMH_STRP6</name>
<reference key="1">
    <citation type="journal article" date="2004" name="J. Infect. Dis.">
        <title>Progress toward characterization of the group A Streptococcus metagenome: complete genome sequence of a macrolide-resistant serotype M6 strain.</title>
        <authorList>
            <person name="Banks D.J."/>
            <person name="Porcella S.F."/>
            <person name="Barbian K.D."/>
            <person name="Beres S.B."/>
            <person name="Philips L.E."/>
            <person name="Voyich J.M."/>
            <person name="DeLeo F.R."/>
            <person name="Martin J.M."/>
            <person name="Somerville G.A."/>
            <person name="Musser J.M."/>
        </authorList>
    </citation>
    <scope>NUCLEOTIDE SEQUENCE [LARGE SCALE GENOMIC DNA]</scope>
    <source>
        <strain>ATCC BAA-946 / MGAS10394</strain>
    </source>
</reference>
<proteinExistence type="inferred from homology"/>
<dbReference type="EC" id="2.1.1.177" evidence="1"/>
<dbReference type="EMBL" id="CP000003">
    <property type="protein sequence ID" value="AAT88019.1"/>
    <property type="molecule type" value="Genomic_DNA"/>
</dbReference>
<dbReference type="RefSeq" id="WP_002981964.1">
    <property type="nucleotide sequence ID" value="NC_006086.1"/>
</dbReference>
<dbReference type="SMR" id="Q5X994"/>
<dbReference type="KEGG" id="spa:M6_Spy1884"/>
<dbReference type="HOGENOM" id="CLU_100552_0_0_9"/>
<dbReference type="Proteomes" id="UP000001167">
    <property type="component" value="Chromosome"/>
</dbReference>
<dbReference type="GO" id="GO:0005737">
    <property type="term" value="C:cytoplasm"/>
    <property type="evidence" value="ECO:0007669"/>
    <property type="project" value="UniProtKB-SubCell"/>
</dbReference>
<dbReference type="GO" id="GO:0070038">
    <property type="term" value="F:rRNA (pseudouridine-N3-)-methyltransferase activity"/>
    <property type="evidence" value="ECO:0007669"/>
    <property type="project" value="UniProtKB-UniRule"/>
</dbReference>
<dbReference type="CDD" id="cd18081">
    <property type="entry name" value="RlmH-like"/>
    <property type="match status" value="1"/>
</dbReference>
<dbReference type="Gene3D" id="3.40.1280.10">
    <property type="match status" value="1"/>
</dbReference>
<dbReference type="HAMAP" id="MF_00658">
    <property type="entry name" value="23SrRNA_methyltr_H"/>
    <property type="match status" value="1"/>
</dbReference>
<dbReference type="InterPro" id="IPR029028">
    <property type="entry name" value="Alpha/beta_knot_MTases"/>
</dbReference>
<dbReference type="InterPro" id="IPR003742">
    <property type="entry name" value="RlmH-like"/>
</dbReference>
<dbReference type="InterPro" id="IPR029026">
    <property type="entry name" value="tRNA_m1G_MTases_N"/>
</dbReference>
<dbReference type="NCBIfam" id="NF000985">
    <property type="entry name" value="PRK00103.1-3"/>
    <property type="match status" value="1"/>
</dbReference>
<dbReference type="NCBIfam" id="TIGR00246">
    <property type="entry name" value="tRNA_RlmH_YbeA"/>
    <property type="match status" value="1"/>
</dbReference>
<dbReference type="PANTHER" id="PTHR33603">
    <property type="entry name" value="METHYLTRANSFERASE"/>
    <property type="match status" value="1"/>
</dbReference>
<dbReference type="PANTHER" id="PTHR33603:SF1">
    <property type="entry name" value="RIBOSOMAL RNA LARGE SUBUNIT METHYLTRANSFERASE H"/>
    <property type="match status" value="1"/>
</dbReference>
<dbReference type="Pfam" id="PF02590">
    <property type="entry name" value="SPOUT_MTase"/>
    <property type="match status" value="1"/>
</dbReference>
<dbReference type="PIRSF" id="PIRSF004505">
    <property type="entry name" value="MT_bac"/>
    <property type="match status" value="1"/>
</dbReference>
<dbReference type="SUPFAM" id="SSF75217">
    <property type="entry name" value="alpha/beta knot"/>
    <property type="match status" value="1"/>
</dbReference>
<feature type="chain" id="PRO_0000198194" description="Ribosomal RNA large subunit methyltransferase H">
    <location>
        <begin position="1"/>
        <end position="159"/>
    </location>
</feature>
<feature type="binding site" evidence="1">
    <location>
        <position position="76"/>
    </location>
    <ligand>
        <name>S-adenosyl-L-methionine</name>
        <dbReference type="ChEBI" id="CHEBI:59789"/>
    </ligand>
</feature>
<feature type="binding site" evidence="1">
    <location>
        <position position="108"/>
    </location>
    <ligand>
        <name>S-adenosyl-L-methionine</name>
        <dbReference type="ChEBI" id="CHEBI:59789"/>
    </ligand>
</feature>
<feature type="binding site" evidence="1">
    <location>
        <begin position="127"/>
        <end position="132"/>
    </location>
    <ligand>
        <name>S-adenosyl-L-methionine</name>
        <dbReference type="ChEBI" id="CHEBI:59789"/>
    </ligand>
</feature>
<evidence type="ECO:0000255" key="1">
    <source>
        <dbReference type="HAMAP-Rule" id="MF_00658"/>
    </source>
</evidence>
<protein>
    <recommendedName>
        <fullName evidence="1">Ribosomal RNA large subunit methyltransferase H</fullName>
        <ecNumber evidence="1">2.1.1.177</ecNumber>
    </recommendedName>
    <alternativeName>
        <fullName evidence="1">23S rRNA (pseudouridine1915-N3)-methyltransferase</fullName>
    </alternativeName>
    <alternativeName>
        <fullName evidence="1">23S rRNA m3Psi1915 methyltransferase</fullName>
    </alternativeName>
    <alternativeName>
        <fullName evidence="1">rRNA (pseudouridine-N3-)-methyltransferase RlmH</fullName>
    </alternativeName>
</protein>
<gene>
    <name evidence="1" type="primary">rlmH</name>
    <name type="ordered locus">M6_Spy1884</name>
</gene>
<accession>Q5X994</accession>
<organism>
    <name type="scientific">Streptococcus pyogenes serotype M6 (strain ATCC BAA-946 / MGAS10394)</name>
    <dbReference type="NCBI Taxonomy" id="286636"/>
    <lineage>
        <taxon>Bacteria</taxon>
        <taxon>Bacillati</taxon>
        <taxon>Bacillota</taxon>
        <taxon>Bacilli</taxon>
        <taxon>Lactobacillales</taxon>
        <taxon>Streptococcaceae</taxon>
        <taxon>Streptococcus</taxon>
    </lineage>
</organism>
<keyword id="KW-0963">Cytoplasm</keyword>
<keyword id="KW-0489">Methyltransferase</keyword>
<keyword id="KW-0698">rRNA processing</keyword>
<keyword id="KW-0949">S-adenosyl-L-methionine</keyword>
<keyword id="KW-0808">Transferase</keyword>